<sequence length="404" mass="42371">MSQQALADKPLLSRGMIAVLCAQFFSAFGDNALLFATLALIKQQLYPDWSQPILQMAFVATYIVLAPFVGQFADSFAKGRVMMVANGLKLAGALVICFGFNPFLGYSLVGVGAAAYSPAKYGILGEITSGEQLVKANGMMEASTIAAILLGSVAGGVLADWHLGVALGVCALVYAIAVVANMFIPKLAAARSGSSWRPRAMTGSFFTACLVLWRDGEARFSLAGTSLFWGAGVTLRFLLVLWVPIALGITDNATPTLLNAMVAIGIVVGAGAAARFVTLKTVKRCLPAGVLIGVAVAIFALQHSMPMAYLLLIIIGILGGFFVVPLNALLQERGKNSVGAGNAIAVQNLGENTAMLLMLGLFSVVVKLGVPVIAVGVGFGVIFALAIALLWGWQWRQQRQKTAE</sequence>
<organism>
    <name type="scientific">Yersinia enterocolitica serotype O:8 / biotype 1B (strain NCTC 13174 / 8081)</name>
    <dbReference type="NCBI Taxonomy" id="393305"/>
    <lineage>
        <taxon>Bacteria</taxon>
        <taxon>Pseudomonadati</taxon>
        <taxon>Pseudomonadota</taxon>
        <taxon>Gammaproteobacteria</taxon>
        <taxon>Enterobacterales</taxon>
        <taxon>Yersiniaceae</taxon>
        <taxon>Yersinia</taxon>
    </lineage>
</organism>
<proteinExistence type="inferred from homology"/>
<keyword id="KW-0997">Cell inner membrane</keyword>
<keyword id="KW-1003">Cell membrane</keyword>
<keyword id="KW-0445">Lipid transport</keyword>
<keyword id="KW-0472">Membrane</keyword>
<keyword id="KW-0812">Transmembrane</keyword>
<keyword id="KW-1133">Transmembrane helix</keyword>
<keyword id="KW-0813">Transport</keyword>
<accession>A1JPE9</accession>
<dbReference type="EMBL" id="AM286415">
    <property type="protein sequence ID" value="CAL13355.1"/>
    <property type="molecule type" value="Genomic_DNA"/>
</dbReference>
<dbReference type="RefSeq" id="WP_011816987.1">
    <property type="nucleotide sequence ID" value="NC_008800.1"/>
</dbReference>
<dbReference type="RefSeq" id="YP_001007499.1">
    <property type="nucleotide sequence ID" value="NC_008800.1"/>
</dbReference>
<dbReference type="SMR" id="A1JPE9"/>
<dbReference type="KEGG" id="yen:YE3326"/>
<dbReference type="PATRIC" id="fig|393305.7.peg.3534"/>
<dbReference type="eggNOG" id="COG0477">
    <property type="taxonomic scope" value="Bacteria"/>
</dbReference>
<dbReference type="HOGENOM" id="CLU_047399_0_0_6"/>
<dbReference type="OrthoDB" id="9803968at2"/>
<dbReference type="Proteomes" id="UP000000642">
    <property type="component" value="Chromosome"/>
</dbReference>
<dbReference type="GO" id="GO:0005886">
    <property type="term" value="C:plasma membrane"/>
    <property type="evidence" value="ECO:0007669"/>
    <property type="project" value="UniProtKB-SubCell"/>
</dbReference>
<dbReference type="GO" id="GO:0051978">
    <property type="term" value="F:lysophospholipid:sodium symporter activity"/>
    <property type="evidence" value="ECO:0007669"/>
    <property type="project" value="InterPro"/>
</dbReference>
<dbReference type="CDD" id="cd06173">
    <property type="entry name" value="MFS_MefA_like"/>
    <property type="match status" value="1"/>
</dbReference>
<dbReference type="Gene3D" id="1.20.1250.20">
    <property type="entry name" value="MFS general substrate transporter like domains"/>
    <property type="match status" value="1"/>
</dbReference>
<dbReference type="HAMAP" id="MF_01585">
    <property type="entry name" value="MFS_LplT"/>
    <property type="match status" value="1"/>
</dbReference>
<dbReference type="InterPro" id="IPR023727">
    <property type="entry name" value="LysoPLipid__transptr_LplT"/>
</dbReference>
<dbReference type="InterPro" id="IPR011701">
    <property type="entry name" value="MFS"/>
</dbReference>
<dbReference type="InterPro" id="IPR036259">
    <property type="entry name" value="MFS_trans_sf"/>
</dbReference>
<dbReference type="NCBIfam" id="NF008397">
    <property type="entry name" value="PRK11195.1"/>
    <property type="match status" value="1"/>
</dbReference>
<dbReference type="PANTHER" id="PTHR43266">
    <property type="entry name" value="MACROLIDE-EFFLUX PROTEIN"/>
    <property type="match status" value="1"/>
</dbReference>
<dbReference type="PANTHER" id="PTHR43266:SF2">
    <property type="entry name" value="MAJOR FACILITATOR SUPERFAMILY (MFS) PROFILE DOMAIN-CONTAINING PROTEIN"/>
    <property type="match status" value="1"/>
</dbReference>
<dbReference type="Pfam" id="PF07690">
    <property type="entry name" value="MFS_1"/>
    <property type="match status" value="1"/>
</dbReference>
<dbReference type="SUPFAM" id="SSF103473">
    <property type="entry name" value="MFS general substrate transporter"/>
    <property type="match status" value="1"/>
</dbReference>
<evidence type="ECO:0000255" key="1">
    <source>
        <dbReference type="HAMAP-Rule" id="MF_01585"/>
    </source>
</evidence>
<name>LPLT_YERE8</name>
<gene>
    <name evidence="1" type="primary">lplT</name>
    <name type="ordered locus">YE3326</name>
</gene>
<comment type="function">
    <text evidence="1">Catalyzes the facilitated diffusion of 2-acyl-glycero-3-phosphoethanolamine (2-acyl-GPE) into the cell.</text>
</comment>
<comment type="subcellular location">
    <subcellularLocation>
        <location evidence="1">Cell inner membrane</location>
        <topology evidence="1">Multi-pass membrane protein</topology>
    </subcellularLocation>
</comment>
<comment type="similarity">
    <text evidence="1">Belongs to the major facilitator superfamily. LplT (TC 2.A.1.42) family.</text>
</comment>
<reference key="1">
    <citation type="journal article" date="2006" name="PLoS Genet.">
        <title>The complete genome sequence and comparative genome analysis of the high pathogenicity Yersinia enterocolitica strain 8081.</title>
        <authorList>
            <person name="Thomson N.R."/>
            <person name="Howard S."/>
            <person name="Wren B.W."/>
            <person name="Holden M.T.G."/>
            <person name="Crossman L."/>
            <person name="Challis G.L."/>
            <person name="Churcher C."/>
            <person name="Mungall K."/>
            <person name="Brooks K."/>
            <person name="Chillingworth T."/>
            <person name="Feltwell T."/>
            <person name="Abdellah Z."/>
            <person name="Hauser H."/>
            <person name="Jagels K."/>
            <person name="Maddison M."/>
            <person name="Moule S."/>
            <person name="Sanders M."/>
            <person name="Whitehead S."/>
            <person name="Quail M.A."/>
            <person name="Dougan G."/>
            <person name="Parkhill J."/>
            <person name="Prentice M.B."/>
        </authorList>
    </citation>
    <scope>NUCLEOTIDE SEQUENCE [LARGE SCALE GENOMIC DNA]</scope>
    <source>
        <strain>NCTC 13174 / 8081</strain>
    </source>
</reference>
<feature type="chain" id="PRO_0000309839" description="Lysophospholipid transporter LplT">
    <location>
        <begin position="1"/>
        <end position="404"/>
    </location>
</feature>
<feature type="transmembrane region" description="Helical" evidence="1">
    <location>
        <begin position="16"/>
        <end position="36"/>
    </location>
</feature>
<feature type="transmembrane region" description="Helical" evidence="1">
    <location>
        <begin position="53"/>
        <end position="73"/>
    </location>
</feature>
<feature type="transmembrane region" description="Helical" evidence="1">
    <location>
        <begin position="91"/>
        <end position="111"/>
    </location>
</feature>
<feature type="transmembrane region" description="Helical" evidence="1">
    <location>
        <begin position="139"/>
        <end position="159"/>
    </location>
</feature>
<feature type="transmembrane region" description="Helical" evidence="1">
    <location>
        <begin position="164"/>
        <end position="184"/>
    </location>
</feature>
<feature type="transmembrane region" description="Helical" evidence="1">
    <location>
        <begin position="195"/>
        <end position="213"/>
    </location>
</feature>
<feature type="transmembrane region" description="Helical" evidence="1">
    <location>
        <begin position="227"/>
        <end position="247"/>
    </location>
</feature>
<feature type="transmembrane region" description="Helical" evidence="1">
    <location>
        <begin position="253"/>
        <end position="273"/>
    </location>
</feature>
<feature type="transmembrane region" description="Helical" evidence="1">
    <location>
        <begin position="285"/>
        <end position="305"/>
    </location>
</feature>
<feature type="transmembrane region" description="Helical" evidence="1">
    <location>
        <begin position="310"/>
        <end position="330"/>
    </location>
</feature>
<feature type="transmembrane region" description="Helical" evidence="1">
    <location>
        <begin position="350"/>
        <end position="370"/>
    </location>
</feature>
<feature type="transmembrane region" description="Helical" evidence="1">
    <location>
        <begin position="372"/>
        <end position="392"/>
    </location>
</feature>
<protein>
    <recommendedName>
        <fullName evidence="1">Lysophospholipid transporter LplT</fullName>
    </recommendedName>
</protein>